<protein>
    <recommendedName>
        <fullName evidence="1">FMN reductase (NADH) RutF</fullName>
        <ecNumber evidence="1">1.5.1.42</ecNumber>
    </recommendedName>
    <alternativeName>
        <fullName evidence="1">FMN reductase</fullName>
    </alternativeName>
    <alternativeName>
        <fullName evidence="1">NADH-flavin reductase RutF</fullName>
    </alternativeName>
    <alternativeName>
        <fullName evidence="1">NADH:flavin oxidoreductase</fullName>
    </alternativeName>
</protein>
<dbReference type="EC" id="1.5.1.42" evidence="1"/>
<dbReference type="EMBL" id="AP009378">
    <property type="protein sequence ID" value="BAI54453.1"/>
    <property type="molecule type" value="Genomic_DNA"/>
</dbReference>
<dbReference type="RefSeq" id="WP_001028098.1">
    <property type="nucleotide sequence ID" value="NC_013654.1"/>
</dbReference>
<dbReference type="SMR" id="D2NGI4"/>
<dbReference type="KEGG" id="ese:ECSF_0913"/>
<dbReference type="PATRIC" id="fig|431946.3.peg.957"/>
<dbReference type="HOGENOM" id="CLU_059021_2_2_6"/>
<dbReference type="GO" id="GO:0010181">
    <property type="term" value="F:FMN binding"/>
    <property type="evidence" value="ECO:0007669"/>
    <property type="project" value="InterPro"/>
</dbReference>
<dbReference type="GO" id="GO:0052874">
    <property type="term" value="F:FMN reductase (NADH) activity"/>
    <property type="evidence" value="ECO:0007669"/>
    <property type="project" value="UniProtKB-EC"/>
</dbReference>
<dbReference type="GO" id="GO:0008752">
    <property type="term" value="F:FMN reductase [NAD(P)H] activity"/>
    <property type="evidence" value="ECO:0007669"/>
    <property type="project" value="InterPro"/>
</dbReference>
<dbReference type="GO" id="GO:0042602">
    <property type="term" value="F:riboflavin reductase (NADPH) activity"/>
    <property type="evidence" value="ECO:0007669"/>
    <property type="project" value="UniProtKB-UniRule"/>
</dbReference>
<dbReference type="GO" id="GO:0019740">
    <property type="term" value="P:nitrogen utilization"/>
    <property type="evidence" value="ECO:0007669"/>
    <property type="project" value="UniProtKB-UniRule"/>
</dbReference>
<dbReference type="GO" id="GO:0006212">
    <property type="term" value="P:uracil catabolic process"/>
    <property type="evidence" value="ECO:0007669"/>
    <property type="project" value="UniProtKB-UniRule"/>
</dbReference>
<dbReference type="FunFam" id="2.30.110.10:FF:000002">
    <property type="entry name" value="FMN reductase (NADH) RutF"/>
    <property type="match status" value="1"/>
</dbReference>
<dbReference type="Gene3D" id="2.30.110.10">
    <property type="entry name" value="Electron Transport, Fmn-binding Protein, Chain A"/>
    <property type="match status" value="1"/>
</dbReference>
<dbReference type="HAMAP" id="MF_00833">
    <property type="entry name" value="RutF"/>
    <property type="match status" value="1"/>
</dbReference>
<dbReference type="InterPro" id="IPR002563">
    <property type="entry name" value="Flavin_Rdtase-like_dom"/>
</dbReference>
<dbReference type="InterPro" id="IPR050268">
    <property type="entry name" value="NADH-dep_flavin_reductase"/>
</dbReference>
<dbReference type="InterPro" id="IPR019917">
    <property type="entry name" value="RutF"/>
</dbReference>
<dbReference type="InterPro" id="IPR012349">
    <property type="entry name" value="Split_barrel_FMN-bd"/>
</dbReference>
<dbReference type="NCBIfam" id="TIGR03615">
    <property type="entry name" value="RutF"/>
    <property type="match status" value="1"/>
</dbReference>
<dbReference type="PANTHER" id="PTHR30466">
    <property type="entry name" value="FLAVIN REDUCTASE"/>
    <property type="match status" value="1"/>
</dbReference>
<dbReference type="PANTHER" id="PTHR30466:SF1">
    <property type="entry name" value="FMN REDUCTASE (NADH) RUTF"/>
    <property type="match status" value="1"/>
</dbReference>
<dbReference type="Pfam" id="PF01613">
    <property type="entry name" value="Flavin_Reduct"/>
    <property type="match status" value="1"/>
</dbReference>
<dbReference type="SMART" id="SM00903">
    <property type="entry name" value="Flavin_Reduct"/>
    <property type="match status" value="1"/>
</dbReference>
<dbReference type="SUPFAM" id="SSF50475">
    <property type="entry name" value="FMN-binding split barrel"/>
    <property type="match status" value="1"/>
</dbReference>
<organism>
    <name type="scientific">Escherichia coli O150:H5 (strain SE15)</name>
    <dbReference type="NCBI Taxonomy" id="431946"/>
    <lineage>
        <taxon>Bacteria</taxon>
        <taxon>Pseudomonadati</taxon>
        <taxon>Pseudomonadota</taxon>
        <taxon>Gammaproteobacteria</taxon>
        <taxon>Enterobacterales</taxon>
        <taxon>Enterobacteriaceae</taxon>
        <taxon>Escherichia</taxon>
    </lineage>
</organism>
<reference key="1">
    <citation type="journal article" date="2010" name="J. Bacteriol.">
        <title>Complete genome sequence of the wild-type commensal Escherichia coli strain SE15, belonging to phylogenetic group B2.</title>
        <authorList>
            <person name="Toh H."/>
            <person name="Oshima K."/>
            <person name="Toyoda A."/>
            <person name="Ogura Y."/>
            <person name="Ooka T."/>
            <person name="Sasamoto H."/>
            <person name="Park S.H."/>
            <person name="Iyoda S."/>
            <person name="Kurokawa K."/>
            <person name="Morita H."/>
            <person name="Itoh K."/>
            <person name="Taylor T.D."/>
            <person name="Hayashi T."/>
            <person name="Hattori M."/>
        </authorList>
    </citation>
    <scope>NUCLEOTIDE SEQUENCE [LARGE SCALE GENOMIC DNA]</scope>
    <source>
        <strain>SE15</strain>
    </source>
</reference>
<accession>D2NGI4</accession>
<name>RUTF_ECOS5</name>
<feature type="chain" id="PRO_0000403012" description="FMN reductase (NADH) RutF">
    <location>
        <begin position="1"/>
        <end position="164"/>
    </location>
</feature>
<comment type="function">
    <text evidence="1">Catalyzes the reduction of FMN to FMNH2 which is used to reduce pyrimidine by RutA via the Rut pathway.</text>
</comment>
<comment type="catalytic activity">
    <reaction evidence="1">
        <text>FMNH2 + NAD(+) = FMN + NADH + 2 H(+)</text>
        <dbReference type="Rhea" id="RHEA:21620"/>
        <dbReference type="ChEBI" id="CHEBI:15378"/>
        <dbReference type="ChEBI" id="CHEBI:57540"/>
        <dbReference type="ChEBI" id="CHEBI:57618"/>
        <dbReference type="ChEBI" id="CHEBI:57945"/>
        <dbReference type="ChEBI" id="CHEBI:58210"/>
        <dbReference type="EC" id="1.5.1.42"/>
    </reaction>
</comment>
<comment type="induction">
    <text evidence="1">Up-regulated by the nitrogen regulatory protein C (NtrC also called GlnG) and repressed by RutR.</text>
</comment>
<comment type="similarity">
    <text evidence="1">Belongs to the non-flavoprotein flavin reductase family. RutF subfamily.</text>
</comment>
<keyword id="KW-0285">Flavoprotein</keyword>
<keyword id="KW-0288">FMN</keyword>
<keyword id="KW-0520">NAD</keyword>
<keyword id="KW-0560">Oxidoreductase</keyword>
<proteinExistence type="inferred from homology"/>
<gene>
    <name evidence="1" type="primary">rutF</name>
    <name type="ordered locus">ECSF_0913</name>
</gene>
<sequence>MNIVDQQTFRDAMSCMGAAVNIITTDGPAGRAGFTASAVCSVTDTPPTLLVCLNRGASVWPVFNENRTLCVNTLSAGQEPLSNLFGGKTPMEHRFAAARWQTGVTGCPQLEKALVSFDCRISQVVSVGTHDILFCAIEAIHRHATPYGLVWFDRSYHALMRPAC</sequence>
<evidence type="ECO:0000255" key="1">
    <source>
        <dbReference type="HAMAP-Rule" id="MF_00833"/>
    </source>
</evidence>